<sequence>MLYKGDTLYLDWLEDGIAELVFDAPGSVNKLDTATVASLGEAIGVLEQQSDLKGLLLRSNKAAFIVGADITEFLSLFLVPEEQLSQWLHFANSVFNRLEDLPVPTIAAVNGYALGGGCECVLATDYRLATPDLRIGLPETKLGIMPGFGGSVRMPRMLGADSALEIIAAGKDVGADQALKIGLVDGVVKAEKLIEGAMAILRQAINGDLDWKAKRQPKQEPLKLSKIEATMSFTIAKGMVAQTAGKHYPAPITAVKTIEAAARFGREEALNLENKSFVPLAHTNEARALVGIFLNDQYVKGKAKKLTKDVETPKQAAVLGAGIMGGGIAYQSAWKGVPVVMKDINDKSLTLGMTEAAKLLNKQLERGKIDGLKLAGVISTIHPTLDYAGFDRVDIVVEAVVENPKVKKAVLAETEQKVRQDTVLASNTSTIPISELANALERPENFCGMHFFNPVHRMPLVEIIRGEKSSDETIAKVVAWASKMGKTPIVVNDCPGFFVNRVLFPYFAGFSQLLRDGADFRKIDKVMEKQFGWPMGPAYLLDVVGIDTAHHAQAVMAAGFPQRMQKDYRDAIDALFDANRFGQKNGLGFWRYKEDSKGKPKKEEDAAVEDLLAEVSQPKRDFSEEEIIARMMIPMVNEVVRCLEEGIIATPAEADMALVYGLGFPPFHGGAFRWLDTLGSAKYLDMAQQYQHLGPLYEVPEGLRNKARHNEPYYPPVEPARPVGDLKTA</sequence>
<accession>Q83PG1</accession>
<accession>Q7UB57</accession>
<protein>
    <recommendedName>
        <fullName evidence="1">Fatty acid oxidation complex subunit alpha</fullName>
    </recommendedName>
    <domain>
        <recommendedName>
            <fullName evidence="1">Enoyl-CoA hydratase/Delta(3)-cis-Delta(2)-trans-enoyl-CoA isomerase/3-hydroxybutyryl-CoA epimerase</fullName>
            <ecNumber evidence="1">4.2.1.17</ecNumber>
            <ecNumber evidence="1">5.1.2.3</ecNumber>
            <ecNumber evidence="1">5.3.3.8</ecNumber>
        </recommendedName>
    </domain>
    <domain>
        <recommendedName>
            <fullName evidence="1">3-hydroxyacyl-CoA dehydrogenase</fullName>
            <ecNumber evidence="1">1.1.1.35</ecNumber>
        </recommendedName>
    </domain>
</protein>
<dbReference type="EC" id="4.2.1.17" evidence="1"/>
<dbReference type="EC" id="5.1.2.3" evidence="1"/>
<dbReference type="EC" id="5.3.3.8" evidence="1"/>
<dbReference type="EC" id="1.1.1.35" evidence="1"/>
<dbReference type="EMBL" id="AE005674">
    <property type="protein sequence ID" value="AAN45357.2"/>
    <property type="molecule type" value="Genomic_DNA"/>
</dbReference>
<dbReference type="EMBL" id="AE014073">
    <property type="protein sequence ID" value="AAP18841.1"/>
    <property type="molecule type" value="Genomic_DNA"/>
</dbReference>
<dbReference type="RefSeq" id="NP_709650.2">
    <property type="nucleotide sequence ID" value="NC_004337.2"/>
</dbReference>
<dbReference type="RefSeq" id="WP_000965917.1">
    <property type="nucleotide sequence ID" value="NZ_WPGW01000036.1"/>
</dbReference>
<dbReference type="SMR" id="Q83PG1"/>
<dbReference type="STRING" id="198214.SF3922"/>
<dbReference type="PaxDb" id="198214-SF3922"/>
<dbReference type="GeneID" id="1024323"/>
<dbReference type="KEGG" id="sfl:SF3922"/>
<dbReference type="KEGG" id="sfx:S3830"/>
<dbReference type="PATRIC" id="fig|198214.7.peg.4622"/>
<dbReference type="HOGENOM" id="CLU_009834_16_3_6"/>
<dbReference type="UniPathway" id="UPA00659"/>
<dbReference type="Proteomes" id="UP000001006">
    <property type="component" value="Chromosome"/>
</dbReference>
<dbReference type="Proteomes" id="UP000002673">
    <property type="component" value="Chromosome"/>
</dbReference>
<dbReference type="GO" id="GO:0036125">
    <property type="term" value="C:fatty acid beta-oxidation multienzyme complex"/>
    <property type="evidence" value="ECO:0007669"/>
    <property type="project" value="InterPro"/>
</dbReference>
<dbReference type="GO" id="GO:0008692">
    <property type="term" value="F:3-hydroxybutyryl-CoA epimerase activity"/>
    <property type="evidence" value="ECO:0007669"/>
    <property type="project" value="UniProtKB-UniRule"/>
</dbReference>
<dbReference type="GO" id="GO:0004165">
    <property type="term" value="F:delta(3)-delta(2)-enoyl-CoA isomerase activity"/>
    <property type="evidence" value="ECO:0007669"/>
    <property type="project" value="UniProtKB-UniRule"/>
</dbReference>
<dbReference type="GO" id="GO:0004300">
    <property type="term" value="F:enoyl-CoA hydratase activity"/>
    <property type="evidence" value="ECO:0007669"/>
    <property type="project" value="UniProtKB-UniRule"/>
</dbReference>
<dbReference type="GO" id="GO:0016509">
    <property type="term" value="F:long-chain-3-hydroxyacyl-CoA dehydrogenase activity"/>
    <property type="evidence" value="ECO:0007669"/>
    <property type="project" value="TreeGrafter"/>
</dbReference>
<dbReference type="GO" id="GO:0070403">
    <property type="term" value="F:NAD+ binding"/>
    <property type="evidence" value="ECO:0007669"/>
    <property type="project" value="InterPro"/>
</dbReference>
<dbReference type="GO" id="GO:0006635">
    <property type="term" value="P:fatty acid beta-oxidation"/>
    <property type="evidence" value="ECO:0007669"/>
    <property type="project" value="UniProtKB-UniRule"/>
</dbReference>
<dbReference type="CDD" id="cd06558">
    <property type="entry name" value="crotonase-like"/>
    <property type="match status" value="1"/>
</dbReference>
<dbReference type="FunFam" id="1.10.1040.50:FF:000001">
    <property type="entry name" value="Fatty acid oxidation complex subunit alpha"/>
    <property type="match status" value="1"/>
</dbReference>
<dbReference type="FunFam" id="3.90.226.10:FF:000018">
    <property type="entry name" value="Fatty acid oxidation complex subunit alpha"/>
    <property type="match status" value="1"/>
</dbReference>
<dbReference type="FunFam" id="3.40.50.720:FF:000009">
    <property type="entry name" value="Fatty oxidation complex, alpha subunit"/>
    <property type="match status" value="1"/>
</dbReference>
<dbReference type="Gene3D" id="1.10.1040.50">
    <property type="match status" value="1"/>
</dbReference>
<dbReference type="Gene3D" id="3.90.226.10">
    <property type="entry name" value="2-enoyl-CoA Hydratase, Chain A, domain 1"/>
    <property type="match status" value="1"/>
</dbReference>
<dbReference type="Gene3D" id="3.40.50.720">
    <property type="entry name" value="NAD(P)-binding Rossmann-like Domain"/>
    <property type="match status" value="1"/>
</dbReference>
<dbReference type="HAMAP" id="MF_01621">
    <property type="entry name" value="FadB"/>
    <property type="match status" value="1"/>
</dbReference>
<dbReference type="InterPro" id="IPR006180">
    <property type="entry name" value="3-OHacyl-CoA_DH_CS"/>
</dbReference>
<dbReference type="InterPro" id="IPR006176">
    <property type="entry name" value="3-OHacyl-CoA_DH_NAD-bd"/>
</dbReference>
<dbReference type="InterPro" id="IPR006108">
    <property type="entry name" value="3HC_DH_C"/>
</dbReference>
<dbReference type="InterPro" id="IPR008927">
    <property type="entry name" value="6-PGluconate_DH-like_C_sf"/>
</dbReference>
<dbReference type="InterPro" id="IPR029045">
    <property type="entry name" value="ClpP/crotonase-like_dom_sf"/>
</dbReference>
<dbReference type="InterPro" id="IPR018376">
    <property type="entry name" value="Enoyl-CoA_hyd/isom_CS"/>
</dbReference>
<dbReference type="InterPro" id="IPR001753">
    <property type="entry name" value="Enoyl-CoA_hydra/iso"/>
</dbReference>
<dbReference type="InterPro" id="IPR050136">
    <property type="entry name" value="FA_oxidation_alpha_subunit"/>
</dbReference>
<dbReference type="InterPro" id="IPR012799">
    <property type="entry name" value="FadB"/>
</dbReference>
<dbReference type="InterPro" id="IPR036291">
    <property type="entry name" value="NAD(P)-bd_dom_sf"/>
</dbReference>
<dbReference type="NCBIfam" id="TIGR02437">
    <property type="entry name" value="FadB"/>
    <property type="match status" value="1"/>
</dbReference>
<dbReference type="NCBIfam" id="NF008727">
    <property type="entry name" value="PRK11730.1"/>
    <property type="match status" value="1"/>
</dbReference>
<dbReference type="PANTHER" id="PTHR43612">
    <property type="entry name" value="TRIFUNCTIONAL ENZYME SUBUNIT ALPHA"/>
    <property type="match status" value="1"/>
</dbReference>
<dbReference type="PANTHER" id="PTHR43612:SF3">
    <property type="entry name" value="TRIFUNCTIONAL ENZYME SUBUNIT ALPHA, MITOCHONDRIAL"/>
    <property type="match status" value="1"/>
</dbReference>
<dbReference type="Pfam" id="PF00725">
    <property type="entry name" value="3HCDH"/>
    <property type="match status" value="2"/>
</dbReference>
<dbReference type="Pfam" id="PF02737">
    <property type="entry name" value="3HCDH_N"/>
    <property type="match status" value="1"/>
</dbReference>
<dbReference type="Pfam" id="PF00378">
    <property type="entry name" value="ECH_1"/>
    <property type="match status" value="1"/>
</dbReference>
<dbReference type="SUPFAM" id="SSF48179">
    <property type="entry name" value="6-phosphogluconate dehydrogenase C-terminal domain-like"/>
    <property type="match status" value="2"/>
</dbReference>
<dbReference type="SUPFAM" id="SSF52096">
    <property type="entry name" value="ClpP/crotonase"/>
    <property type="match status" value="1"/>
</dbReference>
<dbReference type="SUPFAM" id="SSF51735">
    <property type="entry name" value="NAD(P)-binding Rossmann-fold domains"/>
    <property type="match status" value="1"/>
</dbReference>
<dbReference type="PROSITE" id="PS00067">
    <property type="entry name" value="3HCDH"/>
    <property type="match status" value="1"/>
</dbReference>
<dbReference type="PROSITE" id="PS00166">
    <property type="entry name" value="ENOYL_COA_HYDRATASE"/>
    <property type="match status" value="1"/>
</dbReference>
<feature type="chain" id="PRO_0000109289" description="Fatty acid oxidation complex subunit alpha">
    <location>
        <begin position="1"/>
        <end position="729"/>
    </location>
</feature>
<feature type="region of interest" description="Enoyl-CoA hydratase/isomerase" evidence="1">
    <location>
        <begin position="1"/>
        <end position="189"/>
    </location>
</feature>
<feature type="region of interest" description="3-hydroxyacyl-CoA dehydrogenase" evidence="1">
    <location>
        <begin position="311"/>
        <end position="729"/>
    </location>
</feature>
<feature type="region of interest" description="Disordered" evidence="2">
    <location>
        <begin position="708"/>
        <end position="729"/>
    </location>
</feature>
<feature type="active site" description="For 3-hydroxyacyl-CoA dehydrogenase activity" evidence="1">
    <location>
        <position position="450"/>
    </location>
</feature>
<feature type="binding site" evidence="1">
    <location>
        <position position="296"/>
    </location>
    <ligand>
        <name>substrate</name>
    </ligand>
</feature>
<feature type="binding site" evidence="1">
    <location>
        <position position="324"/>
    </location>
    <ligand>
        <name>NAD(+)</name>
        <dbReference type="ChEBI" id="CHEBI:57540"/>
    </ligand>
</feature>
<feature type="binding site" evidence="1">
    <location>
        <position position="343"/>
    </location>
    <ligand>
        <name>NAD(+)</name>
        <dbReference type="ChEBI" id="CHEBI:57540"/>
    </ligand>
</feature>
<feature type="binding site" evidence="1">
    <location>
        <begin position="400"/>
        <end position="402"/>
    </location>
    <ligand>
        <name>NAD(+)</name>
        <dbReference type="ChEBI" id="CHEBI:57540"/>
    </ligand>
</feature>
<feature type="binding site" evidence="1">
    <location>
        <position position="407"/>
    </location>
    <ligand>
        <name>NAD(+)</name>
        <dbReference type="ChEBI" id="CHEBI:57540"/>
    </ligand>
</feature>
<feature type="binding site" evidence="1">
    <location>
        <position position="429"/>
    </location>
    <ligand>
        <name>NAD(+)</name>
        <dbReference type="ChEBI" id="CHEBI:57540"/>
    </ligand>
</feature>
<feature type="binding site" evidence="1">
    <location>
        <position position="453"/>
    </location>
    <ligand>
        <name>NAD(+)</name>
        <dbReference type="ChEBI" id="CHEBI:57540"/>
    </ligand>
</feature>
<feature type="binding site" evidence="1">
    <location>
        <position position="500"/>
    </location>
    <ligand>
        <name>substrate</name>
    </ligand>
</feature>
<feature type="binding site" evidence="1">
    <location>
        <position position="660"/>
    </location>
    <ligand>
        <name>substrate</name>
    </ligand>
</feature>
<feature type="site" description="Important for catalytic activity" evidence="1">
    <location>
        <position position="119"/>
    </location>
</feature>
<feature type="site" description="Important for catalytic activity" evidence="1">
    <location>
        <position position="139"/>
    </location>
</feature>
<gene>
    <name evidence="1" type="primary">fadB</name>
    <name type="ordered locus">SF3922</name>
    <name type="ordered locus">S3830</name>
</gene>
<name>FADB_SHIFL</name>
<keyword id="KW-0276">Fatty acid metabolism</keyword>
<keyword id="KW-0413">Isomerase</keyword>
<keyword id="KW-0442">Lipid degradation</keyword>
<keyword id="KW-0443">Lipid metabolism</keyword>
<keyword id="KW-0456">Lyase</keyword>
<keyword id="KW-0511">Multifunctional enzyme</keyword>
<keyword id="KW-0520">NAD</keyword>
<keyword id="KW-0560">Oxidoreductase</keyword>
<keyword id="KW-1185">Reference proteome</keyword>
<evidence type="ECO:0000255" key="1">
    <source>
        <dbReference type="HAMAP-Rule" id="MF_01621"/>
    </source>
</evidence>
<evidence type="ECO:0000256" key="2">
    <source>
        <dbReference type="SAM" id="MobiDB-lite"/>
    </source>
</evidence>
<organism>
    <name type="scientific">Shigella flexneri</name>
    <dbReference type="NCBI Taxonomy" id="623"/>
    <lineage>
        <taxon>Bacteria</taxon>
        <taxon>Pseudomonadati</taxon>
        <taxon>Pseudomonadota</taxon>
        <taxon>Gammaproteobacteria</taxon>
        <taxon>Enterobacterales</taxon>
        <taxon>Enterobacteriaceae</taxon>
        <taxon>Shigella</taxon>
    </lineage>
</organism>
<proteinExistence type="inferred from homology"/>
<reference key="1">
    <citation type="journal article" date="2002" name="Nucleic Acids Res.">
        <title>Genome sequence of Shigella flexneri 2a: insights into pathogenicity through comparison with genomes of Escherichia coli K12 and O157.</title>
        <authorList>
            <person name="Jin Q."/>
            <person name="Yuan Z."/>
            <person name="Xu J."/>
            <person name="Wang Y."/>
            <person name="Shen Y."/>
            <person name="Lu W."/>
            <person name="Wang J."/>
            <person name="Liu H."/>
            <person name="Yang J."/>
            <person name="Yang F."/>
            <person name="Zhang X."/>
            <person name="Zhang J."/>
            <person name="Yang G."/>
            <person name="Wu H."/>
            <person name="Qu D."/>
            <person name="Dong J."/>
            <person name="Sun L."/>
            <person name="Xue Y."/>
            <person name="Zhao A."/>
            <person name="Gao Y."/>
            <person name="Zhu J."/>
            <person name="Kan B."/>
            <person name="Ding K."/>
            <person name="Chen S."/>
            <person name="Cheng H."/>
            <person name="Yao Z."/>
            <person name="He B."/>
            <person name="Chen R."/>
            <person name="Ma D."/>
            <person name="Qiang B."/>
            <person name="Wen Y."/>
            <person name="Hou Y."/>
            <person name="Yu J."/>
        </authorList>
    </citation>
    <scope>NUCLEOTIDE SEQUENCE [LARGE SCALE GENOMIC DNA]</scope>
    <source>
        <strain>301 / Serotype 2a</strain>
    </source>
</reference>
<reference key="2">
    <citation type="journal article" date="2003" name="Infect. Immun.">
        <title>Complete genome sequence and comparative genomics of Shigella flexneri serotype 2a strain 2457T.</title>
        <authorList>
            <person name="Wei J."/>
            <person name="Goldberg M.B."/>
            <person name="Burland V."/>
            <person name="Venkatesan M.M."/>
            <person name="Deng W."/>
            <person name="Fournier G."/>
            <person name="Mayhew G.F."/>
            <person name="Plunkett G. III"/>
            <person name="Rose D.J."/>
            <person name="Darling A."/>
            <person name="Mau B."/>
            <person name="Perna N.T."/>
            <person name="Payne S.M."/>
            <person name="Runyen-Janecky L.J."/>
            <person name="Zhou S."/>
            <person name="Schwartz D.C."/>
            <person name="Blattner F.R."/>
        </authorList>
    </citation>
    <scope>NUCLEOTIDE SEQUENCE [LARGE SCALE GENOMIC DNA]</scope>
    <source>
        <strain>ATCC 700930 / 2457T / Serotype 2a</strain>
    </source>
</reference>
<comment type="function">
    <text evidence="1">Involved in the aerobic and anaerobic degradation of long-chain fatty acids via beta-oxidation cycle. Catalyzes the formation of 3-oxoacyl-CoA from enoyl-CoA via L-3-hydroxyacyl-CoA. It can also use D-3-hydroxyacyl-CoA and cis-3-enoyl-CoA as substrate.</text>
</comment>
<comment type="catalytic activity">
    <reaction evidence="1">
        <text>a (3S)-3-hydroxyacyl-CoA + NAD(+) = a 3-oxoacyl-CoA + NADH + H(+)</text>
        <dbReference type="Rhea" id="RHEA:22432"/>
        <dbReference type="ChEBI" id="CHEBI:15378"/>
        <dbReference type="ChEBI" id="CHEBI:57318"/>
        <dbReference type="ChEBI" id="CHEBI:57540"/>
        <dbReference type="ChEBI" id="CHEBI:57945"/>
        <dbReference type="ChEBI" id="CHEBI:90726"/>
        <dbReference type="EC" id="1.1.1.35"/>
    </reaction>
</comment>
<comment type="catalytic activity">
    <reaction evidence="1">
        <text>a (3S)-3-hydroxyacyl-CoA = a (2E)-enoyl-CoA + H2O</text>
        <dbReference type="Rhea" id="RHEA:16105"/>
        <dbReference type="ChEBI" id="CHEBI:15377"/>
        <dbReference type="ChEBI" id="CHEBI:57318"/>
        <dbReference type="ChEBI" id="CHEBI:58856"/>
        <dbReference type="EC" id="4.2.1.17"/>
    </reaction>
</comment>
<comment type="catalytic activity">
    <reaction evidence="1">
        <text>a 4-saturated-(3S)-3-hydroxyacyl-CoA = a (3E)-enoyl-CoA + H2O</text>
        <dbReference type="Rhea" id="RHEA:20724"/>
        <dbReference type="ChEBI" id="CHEBI:15377"/>
        <dbReference type="ChEBI" id="CHEBI:58521"/>
        <dbReference type="ChEBI" id="CHEBI:137480"/>
        <dbReference type="EC" id="4.2.1.17"/>
    </reaction>
</comment>
<comment type="catalytic activity">
    <reaction evidence="1">
        <text>(3S)-3-hydroxybutanoyl-CoA = (3R)-3-hydroxybutanoyl-CoA</text>
        <dbReference type="Rhea" id="RHEA:21760"/>
        <dbReference type="ChEBI" id="CHEBI:57315"/>
        <dbReference type="ChEBI" id="CHEBI:57316"/>
        <dbReference type="EC" id="5.1.2.3"/>
    </reaction>
</comment>
<comment type="catalytic activity">
    <reaction evidence="1">
        <text>a (3Z)-enoyl-CoA = a 4-saturated (2E)-enoyl-CoA</text>
        <dbReference type="Rhea" id="RHEA:45900"/>
        <dbReference type="ChEBI" id="CHEBI:85097"/>
        <dbReference type="ChEBI" id="CHEBI:85489"/>
        <dbReference type="EC" id="5.3.3.8"/>
    </reaction>
</comment>
<comment type="catalytic activity">
    <reaction evidence="1">
        <text>a (3E)-enoyl-CoA = a 4-saturated (2E)-enoyl-CoA</text>
        <dbReference type="Rhea" id="RHEA:45228"/>
        <dbReference type="ChEBI" id="CHEBI:58521"/>
        <dbReference type="ChEBI" id="CHEBI:85097"/>
        <dbReference type="EC" id="5.3.3.8"/>
    </reaction>
</comment>
<comment type="pathway">
    <text evidence="1">Lipid metabolism; fatty acid beta-oxidation.</text>
</comment>
<comment type="subunit">
    <text evidence="1">Heterotetramer of two alpha chains (FadB) and two beta chains (FadA).</text>
</comment>
<comment type="similarity">
    <text evidence="1">In the N-terminal section; belongs to the enoyl-CoA hydratase/isomerase family.</text>
</comment>
<comment type="similarity">
    <text evidence="1">In the C-terminal section; belongs to the 3-hydroxyacyl-CoA dehydrogenase family.</text>
</comment>